<reference key="1">
    <citation type="journal article" date="1990" name="Biochim. Biophys. Acta">
        <title>Primary sequence of duck metallothionein.</title>
        <authorList>
            <person name="Lin L.-Y."/>
            <person name="Liu L.-F."/>
            <person name="Tam M.F."/>
            <person name="Huang P.C."/>
            <person name="Vestling M."/>
            <person name="Fenselau C."/>
        </authorList>
    </citation>
    <scope>PROTEIN SEQUENCE</scope>
</reference>
<reference key="2">
    <citation type="journal article" date="1990" name="Biochem. Biophys. Res. Commun.">
        <title>Complete homology in metallothionein from two genera of ducks and their hybrids.</title>
        <authorList>
            <person name="Lin L.-Y."/>
            <person name="Huang P.C."/>
        </authorList>
    </citation>
    <scope>PROTEIN SEQUENCE</scope>
</reference>
<reference key="3">
    <citation type="journal article" date="1996" name="Gene">
        <title>Structure and expression of metallothionein gene in ducks.</title>
        <authorList>
            <person name="Lee Y.J."/>
            <person name="Chen Y.P."/>
            <person name="Wang S.H."/>
            <person name="Chow W.Y."/>
            <person name="Lin L.-Y."/>
        </authorList>
    </citation>
    <scope>NUCLEOTIDE SEQUENCE [MRNA]</scope>
    <source>
        <tissue>Liver</tissue>
    </source>
</reference>
<protein>
    <recommendedName>
        <fullName>Metallothionein</fullName>
        <shortName>MT</shortName>
    </recommendedName>
</protein>
<evidence type="ECO:0000250" key="1">
    <source>
        <dbReference type="UniProtKB" id="P02795"/>
    </source>
</evidence>
<evidence type="ECO:0000305" key="2"/>
<dbReference type="EMBL" id="U34230">
    <property type="protein sequence ID" value="AAC60047.1"/>
    <property type="molecule type" value="mRNA"/>
</dbReference>
<dbReference type="PIR" id="C34620">
    <property type="entry name" value="C34620"/>
</dbReference>
<dbReference type="SMR" id="P68495"/>
<dbReference type="Ensembl" id="ENSCMMT00000015172.1">
    <property type="protein sequence ID" value="ENSCMMP00000013759.1"/>
    <property type="gene ID" value="ENSCMMG00000008778.1"/>
</dbReference>
<dbReference type="Proteomes" id="UP000694556">
    <property type="component" value="Chromosome 12"/>
</dbReference>
<dbReference type="GO" id="GO:0005737">
    <property type="term" value="C:cytoplasm"/>
    <property type="evidence" value="ECO:0007669"/>
    <property type="project" value="TreeGrafter"/>
</dbReference>
<dbReference type="GO" id="GO:0005634">
    <property type="term" value="C:nucleus"/>
    <property type="evidence" value="ECO:0007669"/>
    <property type="project" value="TreeGrafter"/>
</dbReference>
<dbReference type="GO" id="GO:0008270">
    <property type="term" value="F:zinc ion binding"/>
    <property type="evidence" value="ECO:0000250"/>
    <property type="project" value="AgBase"/>
</dbReference>
<dbReference type="GO" id="GO:0071276">
    <property type="term" value="P:cellular response to cadmium ion"/>
    <property type="evidence" value="ECO:0007669"/>
    <property type="project" value="TreeGrafter"/>
</dbReference>
<dbReference type="GO" id="GO:0071280">
    <property type="term" value="P:cellular response to copper ion"/>
    <property type="evidence" value="ECO:0007669"/>
    <property type="project" value="TreeGrafter"/>
</dbReference>
<dbReference type="GO" id="GO:0071294">
    <property type="term" value="P:cellular response to zinc ion"/>
    <property type="evidence" value="ECO:0007669"/>
    <property type="project" value="TreeGrafter"/>
</dbReference>
<dbReference type="GO" id="GO:0010273">
    <property type="term" value="P:detoxification of copper ion"/>
    <property type="evidence" value="ECO:0007669"/>
    <property type="project" value="TreeGrafter"/>
</dbReference>
<dbReference type="GO" id="GO:0006882">
    <property type="term" value="P:intracellular zinc ion homeostasis"/>
    <property type="evidence" value="ECO:0007669"/>
    <property type="project" value="TreeGrafter"/>
</dbReference>
<dbReference type="GO" id="GO:0032496">
    <property type="term" value="P:response to lipopolysaccharide"/>
    <property type="evidence" value="ECO:0000250"/>
    <property type="project" value="AgBase"/>
</dbReference>
<dbReference type="FunFam" id="4.10.10.10:FF:000001">
    <property type="entry name" value="Metallothionein"/>
    <property type="match status" value="1"/>
</dbReference>
<dbReference type="Gene3D" id="4.10.10.10">
    <property type="entry name" value="Metallothionein Isoform II"/>
    <property type="match status" value="1"/>
</dbReference>
<dbReference type="InterPro" id="IPR017854">
    <property type="entry name" value="Metalthion_dom_sf"/>
</dbReference>
<dbReference type="InterPro" id="IPR023587">
    <property type="entry name" value="Metalthion_dom_sf_vert"/>
</dbReference>
<dbReference type="InterPro" id="IPR000006">
    <property type="entry name" value="Metalthion_vert"/>
</dbReference>
<dbReference type="InterPro" id="IPR018064">
    <property type="entry name" value="Metalthion_vert_metal_BS"/>
</dbReference>
<dbReference type="PANTHER" id="PTHR23299">
    <property type="entry name" value="METALLOTHIONEIN"/>
    <property type="match status" value="1"/>
</dbReference>
<dbReference type="PANTHER" id="PTHR23299:SF24">
    <property type="entry name" value="METALLOTHIONEIN-1X"/>
    <property type="match status" value="1"/>
</dbReference>
<dbReference type="Pfam" id="PF00131">
    <property type="entry name" value="Metallothio"/>
    <property type="match status" value="1"/>
</dbReference>
<dbReference type="PRINTS" id="PR00860">
    <property type="entry name" value="MTVERTEBRATE"/>
</dbReference>
<dbReference type="SUPFAM" id="SSF57868">
    <property type="entry name" value="Metallothionein"/>
    <property type="match status" value="1"/>
</dbReference>
<dbReference type="PROSITE" id="PS00203">
    <property type="entry name" value="METALLOTHIONEIN_VRT"/>
    <property type="match status" value="1"/>
</dbReference>
<proteinExistence type="evidence at protein level"/>
<organism>
    <name type="scientific">Cairina moschata</name>
    <name type="common">Muscovy duck</name>
    <dbReference type="NCBI Taxonomy" id="8855"/>
    <lineage>
        <taxon>Eukaryota</taxon>
        <taxon>Metazoa</taxon>
        <taxon>Chordata</taxon>
        <taxon>Craniata</taxon>
        <taxon>Vertebrata</taxon>
        <taxon>Euteleostomi</taxon>
        <taxon>Archelosauria</taxon>
        <taxon>Archosauria</taxon>
        <taxon>Dinosauria</taxon>
        <taxon>Saurischia</taxon>
        <taxon>Theropoda</taxon>
        <taxon>Coelurosauria</taxon>
        <taxon>Aves</taxon>
        <taxon>Neognathae</taxon>
        <taxon>Galloanserae</taxon>
        <taxon>Anseriformes</taxon>
        <taxon>Anatidae</taxon>
        <taxon>Anatinae</taxon>
        <taxon>Cairina</taxon>
    </lineage>
</organism>
<keyword id="KW-0903">Direct protein sequencing</keyword>
<keyword id="KW-0479">Metal-binding</keyword>
<keyword id="KW-0480">Metal-thiolate cluster</keyword>
<keyword id="KW-1185">Reference proteome</keyword>
<keyword id="KW-0862">Zinc</keyword>
<feature type="chain" id="PRO_0000197259" description="Metallothionein">
    <location>
        <begin position="1"/>
        <end position="63"/>
    </location>
</feature>
<feature type="region of interest" description="Beta">
    <location>
        <begin position="1"/>
        <end position="30"/>
    </location>
</feature>
<feature type="region of interest" description="Alpha">
    <location>
        <begin position="31"/>
        <end position="63"/>
    </location>
</feature>
<feature type="binding site" evidence="1">
    <location>
        <position position="6"/>
    </location>
    <ligand>
        <name>a divalent metal cation</name>
        <dbReference type="ChEBI" id="CHEBI:60240"/>
        <label>1</label>
        <note>in cluster B</note>
    </ligand>
</feature>
<feature type="binding site" evidence="1">
    <location>
        <position position="8"/>
    </location>
    <ligand>
        <name>a divalent metal cation</name>
        <dbReference type="ChEBI" id="CHEBI:60240"/>
        <label>1</label>
        <note>in cluster B</note>
    </ligand>
</feature>
<feature type="binding site" evidence="1">
    <location>
        <position position="8"/>
    </location>
    <ligand>
        <name>a divalent metal cation</name>
        <dbReference type="ChEBI" id="CHEBI:60240"/>
        <label>2</label>
        <note>in cluster B</note>
    </ligand>
</feature>
<feature type="binding site" evidence="1">
    <location>
        <position position="14"/>
    </location>
    <ligand>
        <name>a divalent metal cation</name>
        <dbReference type="ChEBI" id="CHEBI:60240"/>
        <label>2</label>
        <note>in cluster B</note>
    </ligand>
</feature>
<feature type="binding site" evidence="1">
    <location>
        <position position="16"/>
    </location>
    <ligand>
        <name>a divalent metal cation</name>
        <dbReference type="ChEBI" id="CHEBI:60240"/>
        <label>2</label>
        <note>in cluster B</note>
    </ligand>
</feature>
<feature type="binding site" evidence="1">
    <location>
        <position position="16"/>
    </location>
    <ligand>
        <name>a divalent metal cation</name>
        <dbReference type="ChEBI" id="CHEBI:60240"/>
        <label>3</label>
        <note>in cluster B</note>
    </ligand>
</feature>
<feature type="binding site" evidence="1">
    <location>
        <position position="20"/>
    </location>
    <ligand>
        <name>a divalent metal cation</name>
        <dbReference type="ChEBI" id="CHEBI:60240"/>
        <label>3</label>
        <note>in cluster B</note>
    </ligand>
</feature>
<feature type="binding site" evidence="1">
    <location>
        <position position="22"/>
    </location>
    <ligand>
        <name>a divalent metal cation</name>
        <dbReference type="ChEBI" id="CHEBI:60240"/>
        <label>1</label>
        <note>in cluster B</note>
    </ligand>
</feature>
<feature type="binding site" evidence="1">
    <location>
        <position position="25"/>
    </location>
    <ligand>
        <name>a divalent metal cation</name>
        <dbReference type="ChEBI" id="CHEBI:60240"/>
        <label>1</label>
        <note>in cluster B</note>
    </ligand>
</feature>
<feature type="binding site" evidence="1">
    <location>
        <position position="25"/>
    </location>
    <ligand>
        <name>a divalent metal cation</name>
        <dbReference type="ChEBI" id="CHEBI:60240"/>
        <label>3</label>
        <note>in cluster B</note>
    </ligand>
</feature>
<feature type="binding site" evidence="1">
    <location>
        <position position="27"/>
    </location>
    <ligand>
        <name>a divalent metal cation</name>
        <dbReference type="ChEBI" id="CHEBI:60240"/>
        <label>2</label>
        <note>in cluster B</note>
    </ligand>
</feature>
<feature type="binding site" evidence="1">
    <location>
        <position position="30"/>
    </location>
    <ligand>
        <name>a divalent metal cation</name>
        <dbReference type="ChEBI" id="CHEBI:60240"/>
        <label>3</label>
        <note>in cluster B</note>
    </ligand>
</feature>
<feature type="binding site" evidence="1">
    <location>
        <position position="34"/>
    </location>
    <ligand>
        <name>a divalent metal cation</name>
        <dbReference type="ChEBI" id="CHEBI:60240"/>
        <label>4</label>
        <note>in cluster A</note>
    </ligand>
</feature>
<feature type="binding site" evidence="1">
    <location>
        <position position="35"/>
    </location>
    <ligand>
        <name>a divalent metal cation</name>
        <dbReference type="ChEBI" id="CHEBI:60240"/>
        <label>4</label>
        <note>in cluster A</note>
    </ligand>
</feature>
<feature type="binding site" evidence="1">
    <location>
        <position position="35"/>
    </location>
    <ligand>
        <name>a divalent metal cation</name>
        <dbReference type="ChEBI" id="CHEBI:60240"/>
        <label>5</label>
        <note>in cluster A</note>
    </ligand>
</feature>
<feature type="binding site" evidence="1">
    <location>
        <position position="37"/>
    </location>
    <ligand>
        <name>a divalent metal cation</name>
        <dbReference type="ChEBI" id="CHEBI:60240"/>
        <label>5</label>
        <note>in cluster A</note>
    </ligand>
</feature>
<feature type="binding site" evidence="1">
    <location>
        <position position="38"/>
    </location>
    <ligand>
        <name>a divalent metal cation</name>
        <dbReference type="ChEBI" id="CHEBI:60240"/>
        <label>5</label>
        <note>in cluster A</note>
    </ligand>
</feature>
<feature type="binding site" evidence="1">
    <location>
        <position position="38"/>
    </location>
    <ligand>
        <name>a divalent metal cation</name>
        <dbReference type="ChEBI" id="CHEBI:60240"/>
        <label>6</label>
        <note>in cluster A</note>
    </ligand>
</feature>
<feature type="binding site" evidence="1">
    <location>
        <position position="42"/>
    </location>
    <ligand>
        <name>a divalent metal cation</name>
        <dbReference type="ChEBI" id="CHEBI:60240"/>
        <label>6</label>
        <note>in cluster A</note>
    </ligand>
</feature>
<feature type="binding site" evidence="1">
    <location>
        <position position="45"/>
    </location>
    <ligand>
        <name>a divalent metal cation</name>
        <dbReference type="ChEBI" id="CHEBI:60240"/>
        <label>4</label>
        <note>in cluster A</note>
    </ligand>
</feature>
<feature type="binding site" evidence="1">
    <location>
        <position position="45"/>
    </location>
    <ligand>
        <name>a divalent metal cation</name>
        <dbReference type="ChEBI" id="CHEBI:60240"/>
        <label>6</label>
        <note>in cluster A</note>
    </ligand>
</feature>
<feature type="binding site" evidence="1">
    <location>
        <position position="49"/>
    </location>
    <ligand>
        <name>a divalent metal cation</name>
        <dbReference type="ChEBI" id="CHEBI:60240"/>
        <label>4</label>
        <note>in cluster A</note>
    </ligand>
</feature>
<feature type="binding site" evidence="1">
    <location>
        <position position="51"/>
    </location>
    <ligand>
        <name>a divalent metal cation</name>
        <dbReference type="ChEBI" id="CHEBI:60240"/>
        <label>5</label>
        <note>in cluster A</note>
    </ligand>
</feature>
<feature type="binding site" evidence="1">
    <location>
        <position position="51"/>
    </location>
    <ligand>
        <name>a divalent metal cation</name>
        <dbReference type="ChEBI" id="CHEBI:60240"/>
        <label>7</label>
        <note>in cluster A</note>
    </ligand>
</feature>
<feature type="binding site" evidence="1">
    <location>
        <position position="59"/>
    </location>
    <ligand>
        <name>a divalent metal cation</name>
        <dbReference type="ChEBI" id="CHEBI:60240"/>
        <label>7</label>
        <note>in cluster A</note>
    </ligand>
</feature>
<feature type="binding site" evidence="1">
    <location>
        <position position="61"/>
    </location>
    <ligand>
        <name>a divalent metal cation</name>
        <dbReference type="ChEBI" id="CHEBI:60240"/>
        <label>7</label>
        <note>in cluster A</note>
    </ligand>
</feature>
<feature type="binding site" evidence="1">
    <location>
        <position position="62"/>
    </location>
    <ligand>
        <name>a divalent metal cation</name>
        <dbReference type="ChEBI" id="CHEBI:60240"/>
        <label>6</label>
        <note>in cluster A</note>
    </ligand>
</feature>
<feature type="binding site" evidence="1">
    <location>
        <position position="62"/>
    </location>
    <ligand>
        <name>a divalent metal cation</name>
        <dbReference type="ChEBI" id="CHEBI:60240"/>
        <label>7</label>
        <note>in cluster A</note>
    </ligand>
</feature>
<name>MT_CAIMO</name>
<sequence length="63" mass="6462">MDPQDCTCAAGDSCSCAGSCKCKNCRCRSCRKSCCSCCPAGCNNCAKGCVCKEPASSKCSCCH</sequence>
<accession>P68495</accession>
<accession>P09576</accession>
<comment type="function">
    <text>Metallothioneins have a high content of cysteine residues that bind various heavy metals.</text>
</comment>
<comment type="domain">
    <text>Class I metallothioneins contain 2 metal-binding domains: four divalent ions are chelated within cluster A of the alpha domain and are coordinated via cysteinyl thiolate bridges to 11 cysteine ligands. Cluster B, the corresponding region within the beta domain, can ligate three divalent ions to 9 cysteines.</text>
</comment>
<comment type="similarity">
    <text evidence="2">Belongs to the metallothionein superfamily. Type 1 family.</text>
</comment>